<dbReference type="EC" id="2.7.7.6" evidence="1"/>
<dbReference type="EMBL" id="CR522870">
    <property type="protein sequence ID" value="CAG35846.1"/>
    <property type="molecule type" value="Genomic_DNA"/>
</dbReference>
<dbReference type="RefSeq" id="WP_011188360.1">
    <property type="nucleotide sequence ID" value="NC_006138.1"/>
</dbReference>
<dbReference type="SMR" id="Q6AP78"/>
<dbReference type="STRING" id="177439.DP1117"/>
<dbReference type="KEGG" id="dps:DP1117"/>
<dbReference type="eggNOG" id="COG0085">
    <property type="taxonomic scope" value="Bacteria"/>
</dbReference>
<dbReference type="HOGENOM" id="CLU_000524_4_0_7"/>
<dbReference type="OrthoDB" id="9803954at2"/>
<dbReference type="Proteomes" id="UP000000602">
    <property type="component" value="Chromosome"/>
</dbReference>
<dbReference type="GO" id="GO:0000428">
    <property type="term" value="C:DNA-directed RNA polymerase complex"/>
    <property type="evidence" value="ECO:0007669"/>
    <property type="project" value="UniProtKB-KW"/>
</dbReference>
<dbReference type="GO" id="GO:0003677">
    <property type="term" value="F:DNA binding"/>
    <property type="evidence" value="ECO:0007669"/>
    <property type="project" value="UniProtKB-UniRule"/>
</dbReference>
<dbReference type="GO" id="GO:0003899">
    <property type="term" value="F:DNA-directed RNA polymerase activity"/>
    <property type="evidence" value="ECO:0007669"/>
    <property type="project" value="UniProtKB-UniRule"/>
</dbReference>
<dbReference type="GO" id="GO:0032549">
    <property type="term" value="F:ribonucleoside binding"/>
    <property type="evidence" value="ECO:0007669"/>
    <property type="project" value="InterPro"/>
</dbReference>
<dbReference type="GO" id="GO:0006351">
    <property type="term" value="P:DNA-templated transcription"/>
    <property type="evidence" value="ECO:0007669"/>
    <property type="project" value="UniProtKB-UniRule"/>
</dbReference>
<dbReference type="CDD" id="cd00653">
    <property type="entry name" value="RNA_pol_B_RPB2"/>
    <property type="match status" value="1"/>
</dbReference>
<dbReference type="FunFam" id="3.90.1800.10:FF:000001">
    <property type="entry name" value="DNA-directed RNA polymerase subunit beta"/>
    <property type="match status" value="1"/>
</dbReference>
<dbReference type="Gene3D" id="2.40.50.100">
    <property type="match status" value="1"/>
</dbReference>
<dbReference type="Gene3D" id="2.40.50.150">
    <property type="match status" value="1"/>
</dbReference>
<dbReference type="Gene3D" id="3.90.1100.10">
    <property type="match status" value="2"/>
</dbReference>
<dbReference type="Gene3D" id="2.30.150.10">
    <property type="entry name" value="DNA-directed RNA polymerase, beta subunit, external 1 domain"/>
    <property type="match status" value="1"/>
</dbReference>
<dbReference type="Gene3D" id="2.40.270.10">
    <property type="entry name" value="DNA-directed RNA polymerase, subunit 2, domain 6"/>
    <property type="match status" value="1"/>
</dbReference>
<dbReference type="Gene3D" id="3.90.1800.10">
    <property type="entry name" value="RNA polymerase alpha subunit dimerisation domain"/>
    <property type="match status" value="1"/>
</dbReference>
<dbReference type="Gene3D" id="3.90.1110.10">
    <property type="entry name" value="RNA polymerase Rpb2, domain 2"/>
    <property type="match status" value="1"/>
</dbReference>
<dbReference type="HAMAP" id="MF_01321">
    <property type="entry name" value="RNApol_bact_RpoB"/>
    <property type="match status" value="1"/>
</dbReference>
<dbReference type="InterPro" id="IPR042107">
    <property type="entry name" value="DNA-dir_RNA_pol_bsu_ext_1_sf"/>
</dbReference>
<dbReference type="InterPro" id="IPR019462">
    <property type="entry name" value="DNA-dir_RNA_pol_bsu_external_1"/>
</dbReference>
<dbReference type="InterPro" id="IPR015712">
    <property type="entry name" value="DNA-dir_RNA_pol_su2"/>
</dbReference>
<dbReference type="InterPro" id="IPR007120">
    <property type="entry name" value="DNA-dir_RNAP_su2_dom"/>
</dbReference>
<dbReference type="InterPro" id="IPR037033">
    <property type="entry name" value="DNA-dir_RNAP_su2_hyb_sf"/>
</dbReference>
<dbReference type="InterPro" id="IPR010243">
    <property type="entry name" value="RNA_pol_bsu_bac"/>
</dbReference>
<dbReference type="InterPro" id="IPR007121">
    <property type="entry name" value="RNA_pol_bsu_CS"/>
</dbReference>
<dbReference type="InterPro" id="IPR007644">
    <property type="entry name" value="RNA_pol_bsu_protrusion"/>
</dbReference>
<dbReference type="InterPro" id="IPR007642">
    <property type="entry name" value="RNA_pol_Rpb2_2"/>
</dbReference>
<dbReference type="InterPro" id="IPR037034">
    <property type="entry name" value="RNA_pol_Rpb2_2_sf"/>
</dbReference>
<dbReference type="InterPro" id="IPR007645">
    <property type="entry name" value="RNA_pol_Rpb2_3"/>
</dbReference>
<dbReference type="InterPro" id="IPR007641">
    <property type="entry name" value="RNA_pol_Rpb2_7"/>
</dbReference>
<dbReference type="InterPro" id="IPR014724">
    <property type="entry name" value="RNA_pol_RPB2_OB-fold"/>
</dbReference>
<dbReference type="NCBIfam" id="NF001616">
    <property type="entry name" value="PRK00405.1"/>
    <property type="match status" value="1"/>
</dbReference>
<dbReference type="NCBIfam" id="TIGR02013">
    <property type="entry name" value="rpoB"/>
    <property type="match status" value="1"/>
</dbReference>
<dbReference type="PANTHER" id="PTHR20856">
    <property type="entry name" value="DNA-DIRECTED RNA POLYMERASE I SUBUNIT 2"/>
    <property type="match status" value="1"/>
</dbReference>
<dbReference type="Pfam" id="PF04563">
    <property type="entry name" value="RNA_pol_Rpb2_1"/>
    <property type="match status" value="1"/>
</dbReference>
<dbReference type="Pfam" id="PF04561">
    <property type="entry name" value="RNA_pol_Rpb2_2"/>
    <property type="match status" value="2"/>
</dbReference>
<dbReference type="Pfam" id="PF04565">
    <property type="entry name" value="RNA_pol_Rpb2_3"/>
    <property type="match status" value="1"/>
</dbReference>
<dbReference type="Pfam" id="PF10385">
    <property type="entry name" value="RNA_pol_Rpb2_45"/>
    <property type="match status" value="1"/>
</dbReference>
<dbReference type="Pfam" id="PF00562">
    <property type="entry name" value="RNA_pol_Rpb2_6"/>
    <property type="match status" value="1"/>
</dbReference>
<dbReference type="Pfam" id="PF04560">
    <property type="entry name" value="RNA_pol_Rpb2_7"/>
    <property type="match status" value="1"/>
</dbReference>
<dbReference type="SUPFAM" id="SSF64484">
    <property type="entry name" value="beta and beta-prime subunits of DNA dependent RNA-polymerase"/>
    <property type="match status" value="1"/>
</dbReference>
<dbReference type="PROSITE" id="PS01166">
    <property type="entry name" value="RNA_POL_BETA"/>
    <property type="match status" value="1"/>
</dbReference>
<reference key="1">
    <citation type="journal article" date="2004" name="Environ. Microbiol.">
        <title>The genome of Desulfotalea psychrophila, a sulfate-reducing bacterium from permanently cold Arctic sediments.</title>
        <authorList>
            <person name="Rabus R."/>
            <person name="Ruepp A."/>
            <person name="Frickey T."/>
            <person name="Rattei T."/>
            <person name="Fartmann B."/>
            <person name="Stark M."/>
            <person name="Bauer M."/>
            <person name="Zibat A."/>
            <person name="Lombardot T."/>
            <person name="Becker I."/>
            <person name="Amann J."/>
            <person name="Gellner K."/>
            <person name="Teeling H."/>
            <person name="Leuschner W.D."/>
            <person name="Gloeckner F.-O."/>
            <person name="Lupas A.N."/>
            <person name="Amann R."/>
            <person name="Klenk H.-P."/>
        </authorList>
    </citation>
    <scope>NUCLEOTIDE SEQUENCE [LARGE SCALE GENOMIC DNA]</scope>
    <source>
        <strain>DSM 12343 / LSv54</strain>
    </source>
</reference>
<proteinExistence type="inferred from homology"/>
<accession>Q6AP78</accession>
<gene>
    <name evidence="1" type="primary">rpoB</name>
    <name type="ordered locus">DP1117</name>
</gene>
<evidence type="ECO:0000255" key="1">
    <source>
        <dbReference type="HAMAP-Rule" id="MF_01321"/>
    </source>
</evidence>
<comment type="function">
    <text evidence="1">DNA-dependent RNA polymerase catalyzes the transcription of DNA into RNA using the four ribonucleoside triphosphates as substrates.</text>
</comment>
<comment type="catalytic activity">
    <reaction evidence="1">
        <text>RNA(n) + a ribonucleoside 5'-triphosphate = RNA(n+1) + diphosphate</text>
        <dbReference type="Rhea" id="RHEA:21248"/>
        <dbReference type="Rhea" id="RHEA-COMP:14527"/>
        <dbReference type="Rhea" id="RHEA-COMP:17342"/>
        <dbReference type="ChEBI" id="CHEBI:33019"/>
        <dbReference type="ChEBI" id="CHEBI:61557"/>
        <dbReference type="ChEBI" id="CHEBI:140395"/>
        <dbReference type="EC" id="2.7.7.6"/>
    </reaction>
</comment>
<comment type="subunit">
    <text evidence="1">The RNAP catalytic core consists of 2 alpha, 1 beta, 1 beta' and 1 omega subunit. When a sigma factor is associated with the core the holoenzyme is formed, which can initiate transcription.</text>
</comment>
<comment type="similarity">
    <text evidence="1">Belongs to the RNA polymerase beta chain family.</text>
</comment>
<feature type="chain" id="PRO_0000224051" description="DNA-directed RNA polymerase subunit beta">
    <location>
        <begin position="1"/>
        <end position="1360"/>
    </location>
</feature>
<name>RPOB_DESPS</name>
<protein>
    <recommendedName>
        <fullName evidence="1">DNA-directed RNA polymerase subunit beta</fullName>
        <shortName evidence="1">RNAP subunit beta</shortName>
        <ecNumber evidence="1">2.7.7.6</ecNumber>
    </recommendedName>
    <alternativeName>
        <fullName evidence="1">RNA polymerase subunit beta</fullName>
    </alternativeName>
    <alternativeName>
        <fullName evidence="1">Transcriptase subunit beta</fullName>
    </alternativeName>
</protein>
<organism>
    <name type="scientific">Desulfotalea psychrophila (strain LSv54 / DSM 12343)</name>
    <dbReference type="NCBI Taxonomy" id="177439"/>
    <lineage>
        <taxon>Bacteria</taxon>
        <taxon>Pseudomonadati</taxon>
        <taxon>Thermodesulfobacteriota</taxon>
        <taxon>Desulfobulbia</taxon>
        <taxon>Desulfobulbales</taxon>
        <taxon>Desulfocapsaceae</taxon>
        <taxon>Desulfotalea</taxon>
    </lineage>
</organism>
<sequence>MERVRKNFATADNVLEPPHLISMQRISYEEFLQIDRAPEEREDVGLQAILKNIFPINDFNGLCSLEFLKYKFGEPKYTVQECQQRGMSYEIPLKIVVRLITFDVDEETGVQTIRDMKEQEVFLGSLPLMTADGVFVVNGTERVIVSQLQRSPGLFYSHDNGKSHSSGKLLYSARIIPVRGSWIDLEFDIKDVLHVRIDRRRKFPVTTLLKALGYSSEELLREFYPLENVKLSDGKYWVRFVAEHTAGQRLEFDLVNPQDGEILAKKGRKISKALCRKAVEAGIEFIEASSETILGKVLASAITLAGAEEPLYPCNTEITETVLENLAENGINEFETLFMDGVNYSASFSHTLRLDKVITTAEALLEIYRRLRPSSPPTLEIATTFFENLFFNPDLYDLSEVGRYKINAKLGLKTDIEHRALTRDDIIYGVRYLVRLKDNQGGIDDIDHLGNRRVRTVGELVENQYRMGLVRMERAIKERMTLQDVETLMPHDLINPKPISAAIKEFFGTSQLSQFMDQTNALSEVTHKRRLSALGPGGLSRERAGFEVRDVHPTHYGRICPIETPEGPNIGLIVSLATYARVNPYGFIETPYRKVENRVILDDIRYLSALEEQKQIIAPALVALEADHQSISEGNLIAREEGDVITIGSDNVTYMDVAPNQMISVAASLVPFLENDDANRALMGSNMQRQAVPLLVTAAPLVGTGMERYVARDSGACLLSAGDGVVEEVDSNRVVVRYDKPGVDGYDTGVAVYRLTKYKKSNQNTCFTQTPTILPGLKVEKGTLLADGPGCEAGELALGKNLTVAFMPWRGFNYEDSILINERLLKEDAYTSIHIDVFETMARDTKLGKEEITRDIPNVSEDTLRNLDDSGIVRVGAEIKPGDTLVGKVTPKGETVLSPEEKLLRAIFGEKAQDVKDSSLRVPPGVTGVVIDAKVFSRKGVDKDERSLMIEDLEIERLEGDKRDELRSLKNGVCRELGELIAGNTALGDILDSKGELLISSGDKIEVVHAIAIGFHRLKDIDFSGMADCTDRMDAAYERYQKQAEVIAQRYDGIIERQKKGDDLPPGVVKMVKVYVATKRKLSVGDKMAGRHGNKGVVSRILPEEDMPYFANGDTVDIVLNPLGVPSRMNVGQILEVHLGFAAKNLGAQLEKLAEQYAVEEIKAKLSRVYSDSEYHAIIDGKTDAEVIDWAYRHRKGLHMATPVFDGAEEAEIRKLLIESGVDKGGQSQLYDGLTGEPFANLVTVGVMYMLKLHHLVDNKIHARSTGPYSLVTQQPLGGKAQFGGQRLGEMEVWAMEAYGAAYTLKEFLTVKSDDVEGRTTMYERIVKGNNFLTTGLPESFHVLVKELQGLCLNMELIEE</sequence>
<keyword id="KW-0240">DNA-directed RNA polymerase</keyword>
<keyword id="KW-0548">Nucleotidyltransferase</keyword>
<keyword id="KW-1185">Reference proteome</keyword>
<keyword id="KW-0804">Transcription</keyword>
<keyword id="KW-0808">Transferase</keyword>